<organism>
    <name type="scientific">Xylella fastidiosa (strain M23)</name>
    <dbReference type="NCBI Taxonomy" id="405441"/>
    <lineage>
        <taxon>Bacteria</taxon>
        <taxon>Pseudomonadati</taxon>
        <taxon>Pseudomonadota</taxon>
        <taxon>Gammaproteobacteria</taxon>
        <taxon>Lysobacterales</taxon>
        <taxon>Lysobacteraceae</taxon>
        <taxon>Xylella</taxon>
    </lineage>
</organism>
<dbReference type="EC" id="4.2.1.59" evidence="1"/>
<dbReference type="EC" id="5.3.3.14" evidence="1"/>
<dbReference type="EMBL" id="CP001011">
    <property type="protein sequence ID" value="ACB93067.1"/>
    <property type="molecule type" value="Genomic_DNA"/>
</dbReference>
<dbReference type="RefSeq" id="WP_004088753.1">
    <property type="nucleotide sequence ID" value="NC_010577.1"/>
</dbReference>
<dbReference type="SMR" id="B2I7H0"/>
<dbReference type="GeneID" id="93905399"/>
<dbReference type="KEGG" id="xfn:XfasM23_1660"/>
<dbReference type="HOGENOM" id="CLU_097925_0_0_6"/>
<dbReference type="UniPathway" id="UPA00094"/>
<dbReference type="Proteomes" id="UP000001698">
    <property type="component" value="Chromosome"/>
</dbReference>
<dbReference type="GO" id="GO:0005737">
    <property type="term" value="C:cytoplasm"/>
    <property type="evidence" value="ECO:0007669"/>
    <property type="project" value="UniProtKB-SubCell"/>
</dbReference>
<dbReference type="GO" id="GO:0019171">
    <property type="term" value="F:(3R)-hydroxyacyl-[acyl-carrier-protein] dehydratase activity"/>
    <property type="evidence" value="ECO:0007669"/>
    <property type="project" value="UniProtKB-UniRule"/>
</dbReference>
<dbReference type="GO" id="GO:0034017">
    <property type="term" value="F:trans-2-decenoyl-acyl-carrier-protein isomerase activity"/>
    <property type="evidence" value="ECO:0007669"/>
    <property type="project" value="UniProtKB-UniRule"/>
</dbReference>
<dbReference type="GO" id="GO:0006636">
    <property type="term" value="P:unsaturated fatty acid biosynthetic process"/>
    <property type="evidence" value="ECO:0007669"/>
    <property type="project" value="UniProtKB-UniRule"/>
</dbReference>
<dbReference type="Gene3D" id="3.10.129.10">
    <property type="entry name" value="Hotdog Thioesterase"/>
    <property type="match status" value="1"/>
</dbReference>
<dbReference type="HAMAP" id="MF_00405">
    <property type="entry name" value="FabA"/>
    <property type="match status" value="1"/>
</dbReference>
<dbReference type="InterPro" id="IPR010083">
    <property type="entry name" value="FabA"/>
</dbReference>
<dbReference type="InterPro" id="IPR013114">
    <property type="entry name" value="FabA_FabZ"/>
</dbReference>
<dbReference type="InterPro" id="IPR029069">
    <property type="entry name" value="HotDog_dom_sf"/>
</dbReference>
<dbReference type="NCBIfam" id="TIGR01749">
    <property type="entry name" value="fabA"/>
    <property type="match status" value="1"/>
</dbReference>
<dbReference type="NCBIfam" id="NF003509">
    <property type="entry name" value="PRK05174.1"/>
    <property type="match status" value="1"/>
</dbReference>
<dbReference type="PANTHER" id="PTHR30272">
    <property type="entry name" value="3-HYDROXYACYL-[ACYL-CARRIER-PROTEIN] DEHYDRATASE"/>
    <property type="match status" value="1"/>
</dbReference>
<dbReference type="PANTHER" id="PTHR30272:SF8">
    <property type="entry name" value="3-HYDROXYDECANOYL-[ACYL-CARRIER-PROTEIN] DEHYDRATASE"/>
    <property type="match status" value="1"/>
</dbReference>
<dbReference type="Pfam" id="PF07977">
    <property type="entry name" value="FabA"/>
    <property type="match status" value="1"/>
</dbReference>
<dbReference type="SUPFAM" id="SSF54637">
    <property type="entry name" value="Thioesterase/thiol ester dehydrase-isomerase"/>
    <property type="match status" value="1"/>
</dbReference>
<comment type="function">
    <text evidence="1">Necessary for the introduction of cis unsaturation into fatty acids. Catalyzes the dehydration of (3R)-3-hydroxydecanoyl-ACP to E-(2)-decenoyl-ACP and then its isomerization to Z-(3)-decenoyl-ACP. Can catalyze the dehydratase reaction for beta-hydroxyacyl-ACPs with saturated chain lengths up to 16:0, being most active on intermediate chain length.</text>
</comment>
<comment type="catalytic activity">
    <reaction evidence="1">
        <text>a (3R)-hydroxyacyl-[ACP] = a (2E)-enoyl-[ACP] + H2O</text>
        <dbReference type="Rhea" id="RHEA:13097"/>
        <dbReference type="Rhea" id="RHEA-COMP:9925"/>
        <dbReference type="Rhea" id="RHEA-COMP:9945"/>
        <dbReference type="ChEBI" id="CHEBI:15377"/>
        <dbReference type="ChEBI" id="CHEBI:78784"/>
        <dbReference type="ChEBI" id="CHEBI:78827"/>
        <dbReference type="EC" id="4.2.1.59"/>
    </reaction>
</comment>
<comment type="catalytic activity">
    <reaction evidence="1">
        <text>(3R)-hydroxydecanoyl-[ACP] = (2E)-decenoyl-[ACP] + H2O</text>
        <dbReference type="Rhea" id="RHEA:41860"/>
        <dbReference type="Rhea" id="RHEA-COMP:9638"/>
        <dbReference type="Rhea" id="RHEA-COMP:9639"/>
        <dbReference type="ChEBI" id="CHEBI:15377"/>
        <dbReference type="ChEBI" id="CHEBI:78466"/>
        <dbReference type="ChEBI" id="CHEBI:78467"/>
    </reaction>
</comment>
<comment type="catalytic activity">
    <reaction evidence="1">
        <text>(2E)-decenoyl-[ACP] = (3Z)-decenoyl-[ACP]</text>
        <dbReference type="Rhea" id="RHEA:23568"/>
        <dbReference type="Rhea" id="RHEA-COMP:9639"/>
        <dbReference type="Rhea" id="RHEA-COMP:9927"/>
        <dbReference type="ChEBI" id="CHEBI:78467"/>
        <dbReference type="ChEBI" id="CHEBI:78798"/>
        <dbReference type="EC" id="5.3.3.14"/>
    </reaction>
</comment>
<comment type="pathway">
    <text evidence="1">Lipid metabolism; fatty acid biosynthesis.</text>
</comment>
<comment type="subunit">
    <text evidence="1">Homodimer.</text>
</comment>
<comment type="subcellular location">
    <subcellularLocation>
        <location evidence="1">Cytoplasm</location>
    </subcellularLocation>
</comment>
<comment type="similarity">
    <text evidence="1">Belongs to the thioester dehydratase family. FabA subfamily.</text>
</comment>
<proteinExistence type="inferred from homology"/>
<gene>
    <name evidence="1" type="primary">fabA</name>
    <name type="ordered locus">XfasM23_1660</name>
</gene>
<keyword id="KW-0963">Cytoplasm</keyword>
<keyword id="KW-0275">Fatty acid biosynthesis</keyword>
<keyword id="KW-0276">Fatty acid metabolism</keyword>
<keyword id="KW-0413">Isomerase</keyword>
<keyword id="KW-0444">Lipid biosynthesis</keyword>
<keyword id="KW-0443">Lipid metabolism</keyword>
<keyword id="KW-0456">Lyase</keyword>
<protein>
    <recommendedName>
        <fullName evidence="1">3-hydroxydecanoyl-[acyl-carrier-protein] dehydratase</fullName>
        <ecNumber evidence="1">4.2.1.59</ecNumber>
    </recommendedName>
    <alternativeName>
        <fullName evidence="1">3-hydroxyacyl-[acyl-carrier-protein] dehydratase FabA</fullName>
    </alternativeName>
    <alternativeName>
        <fullName evidence="1">Beta-hydroxydecanoyl thioester dehydrase</fullName>
    </alternativeName>
    <alternativeName>
        <fullName evidence="1">Trans-2-decenoyl-[acyl-carrier-protein] isomerase</fullName>
        <ecNumber evidence="1">5.3.3.14</ecNumber>
    </alternativeName>
</protein>
<feature type="chain" id="PRO_1000201229" description="3-hydroxydecanoyl-[acyl-carrier-protein] dehydratase">
    <location>
        <begin position="1"/>
        <end position="172"/>
    </location>
</feature>
<feature type="active site" evidence="1">
    <location>
        <position position="70"/>
    </location>
</feature>
<reference key="1">
    <citation type="journal article" date="2010" name="J. Bacteriol.">
        <title>Whole genome sequences of two Xylella fastidiosa strains (M12 and M23) causing almond leaf scorch disease in California.</title>
        <authorList>
            <person name="Chen J."/>
            <person name="Xie G."/>
            <person name="Han S."/>
            <person name="Chertkov O."/>
            <person name="Sims D."/>
            <person name="Civerolo E.L."/>
        </authorList>
    </citation>
    <scope>NUCLEOTIDE SEQUENCE [LARGE SCALE GENOMIC DNA]</scope>
    <source>
        <strain>M23</strain>
    </source>
</reference>
<name>FABA_XYLF2</name>
<accession>B2I7H0</accession>
<sequence length="172" mass="19285">MSRQHAYSREELLATARGELFSHSNARLPNDPMLMFDRITEIYADGGSHGKGIVNAELDIRPDLWFFGCHFLGDPVMPGCLGLDAMWQLTGFFLTWSGATPGYGRALGCGEVKFTGQVLPNAKLVRYEVEMTKIINRTLVIGQANARMLVDNREIYFAKDLRVGMFNNTESF</sequence>
<evidence type="ECO:0000255" key="1">
    <source>
        <dbReference type="HAMAP-Rule" id="MF_00405"/>
    </source>
</evidence>